<reference key="1">
    <citation type="journal article" date="2006" name="Appl. Environ. Microbiol.">
        <title>Genome sequence of the chemolithoautotrophic nitrite-oxidizing bacterium Nitrobacter winogradskyi Nb-255.</title>
        <authorList>
            <person name="Starkenburg S.R."/>
            <person name="Chain P.S.G."/>
            <person name="Sayavedra-Soto L.A."/>
            <person name="Hauser L."/>
            <person name="Land M.L."/>
            <person name="Larimer F.W."/>
            <person name="Malfatti S.A."/>
            <person name="Klotz M.G."/>
            <person name="Bottomley P.J."/>
            <person name="Arp D.J."/>
            <person name="Hickey W.J."/>
        </authorList>
    </citation>
    <scope>NUCLEOTIDE SEQUENCE [LARGE SCALE GENOMIC DNA]</scope>
    <source>
        <strain>ATCC 25391 / DSM 10237 / CIP 104748 / NCIMB 11846 / Nb-255</strain>
    </source>
</reference>
<gene>
    <name evidence="1" type="primary">atpF1</name>
    <name type="ordered locus">Nwi_0235</name>
</gene>
<organism>
    <name type="scientific">Nitrobacter winogradskyi (strain ATCC 25391 / DSM 10237 / CIP 104748 / NCIMB 11846 / Nb-255)</name>
    <dbReference type="NCBI Taxonomy" id="323098"/>
    <lineage>
        <taxon>Bacteria</taxon>
        <taxon>Pseudomonadati</taxon>
        <taxon>Pseudomonadota</taxon>
        <taxon>Alphaproteobacteria</taxon>
        <taxon>Hyphomicrobiales</taxon>
        <taxon>Nitrobacteraceae</taxon>
        <taxon>Nitrobacter</taxon>
    </lineage>
</organism>
<dbReference type="EMBL" id="CP000115">
    <property type="protein sequence ID" value="ABA03503.1"/>
    <property type="molecule type" value="Genomic_DNA"/>
</dbReference>
<dbReference type="RefSeq" id="WP_011313570.1">
    <property type="nucleotide sequence ID" value="NC_007406.1"/>
</dbReference>
<dbReference type="SMR" id="Q3SW38"/>
<dbReference type="STRING" id="323098.Nwi_0235"/>
<dbReference type="KEGG" id="nwi:Nwi_0235"/>
<dbReference type="eggNOG" id="COG0711">
    <property type="taxonomic scope" value="Bacteria"/>
</dbReference>
<dbReference type="HOGENOM" id="CLU_079215_6_1_5"/>
<dbReference type="OrthoDB" id="8479836at2"/>
<dbReference type="Proteomes" id="UP000002531">
    <property type="component" value="Chromosome"/>
</dbReference>
<dbReference type="GO" id="GO:0005886">
    <property type="term" value="C:plasma membrane"/>
    <property type="evidence" value="ECO:0007669"/>
    <property type="project" value="UniProtKB-SubCell"/>
</dbReference>
<dbReference type="GO" id="GO:0045259">
    <property type="term" value="C:proton-transporting ATP synthase complex"/>
    <property type="evidence" value="ECO:0007669"/>
    <property type="project" value="UniProtKB-KW"/>
</dbReference>
<dbReference type="GO" id="GO:0046933">
    <property type="term" value="F:proton-transporting ATP synthase activity, rotational mechanism"/>
    <property type="evidence" value="ECO:0007669"/>
    <property type="project" value="UniProtKB-UniRule"/>
</dbReference>
<dbReference type="GO" id="GO:0046961">
    <property type="term" value="F:proton-transporting ATPase activity, rotational mechanism"/>
    <property type="evidence" value="ECO:0007669"/>
    <property type="project" value="TreeGrafter"/>
</dbReference>
<dbReference type="CDD" id="cd06503">
    <property type="entry name" value="ATP-synt_Fo_b"/>
    <property type="match status" value="1"/>
</dbReference>
<dbReference type="HAMAP" id="MF_01398">
    <property type="entry name" value="ATP_synth_b_bprime"/>
    <property type="match status" value="1"/>
</dbReference>
<dbReference type="InterPro" id="IPR002146">
    <property type="entry name" value="ATP_synth_b/b'su_bac/chlpt"/>
</dbReference>
<dbReference type="InterPro" id="IPR050059">
    <property type="entry name" value="ATP_synthase_B_chain"/>
</dbReference>
<dbReference type="PANTHER" id="PTHR33445:SF1">
    <property type="entry name" value="ATP SYNTHASE SUBUNIT B"/>
    <property type="match status" value="1"/>
</dbReference>
<dbReference type="PANTHER" id="PTHR33445">
    <property type="entry name" value="ATP SYNTHASE SUBUNIT B', CHLOROPLASTIC"/>
    <property type="match status" value="1"/>
</dbReference>
<dbReference type="Pfam" id="PF00430">
    <property type="entry name" value="ATP-synt_B"/>
    <property type="match status" value="1"/>
</dbReference>
<protein>
    <recommendedName>
        <fullName evidence="1">ATP synthase subunit b 1</fullName>
    </recommendedName>
    <alternativeName>
        <fullName evidence="1">ATP synthase F(0) sector subunit b 1</fullName>
    </alternativeName>
    <alternativeName>
        <fullName evidence="1">ATPase subunit I 1</fullName>
    </alternativeName>
    <alternativeName>
        <fullName evidence="1">F-type ATPase subunit b 1</fullName>
        <shortName evidence="1">F-ATPase subunit b 1</shortName>
    </alternativeName>
</protein>
<proteinExistence type="inferred from homology"/>
<evidence type="ECO:0000255" key="1">
    <source>
        <dbReference type="HAMAP-Rule" id="MF_01398"/>
    </source>
</evidence>
<accession>Q3SW38</accession>
<name>ATPF1_NITWN</name>
<keyword id="KW-0066">ATP synthesis</keyword>
<keyword id="KW-0997">Cell inner membrane</keyword>
<keyword id="KW-1003">Cell membrane</keyword>
<keyword id="KW-0138">CF(0)</keyword>
<keyword id="KW-0375">Hydrogen ion transport</keyword>
<keyword id="KW-0406">Ion transport</keyword>
<keyword id="KW-0472">Membrane</keyword>
<keyword id="KW-1185">Reference proteome</keyword>
<keyword id="KW-0812">Transmembrane</keyword>
<keyword id="KW-1133">Transmembrane helix</keyword>
<keyword id="KW-0813">Transport</keyword>
<sequence>MLAEPETWVAIAFLLLMGVFAYVGVHRTVLSALDRRSARIKNELDDARRLKDEAAKLLADYKARHASAEREAQDIIASARAEAERIAAEAKAKMEDFVARRTKSAEGKIASAEAQAIADVRAAAADAAVAAASSILSNSVKGQLADELLVQGVSEVRSKLN</sequence>
<feature type="chain" id="PRO_0000368627" description="ATP synthase subunit b 1">
    <location>
        <begin position="1"/>
        <end position="161"/>
    </location>
</feature>
<feature type="transmembrane region" description="Helical" evidence="1">
    <location>
        <begin position="5"/>
        <end position="25"/>
    </location>
</feature>
<comment type="function">
    <text evidence="1">F(1)F(0) ATP synthase produces ATP from ADP in the presence of a proton or sodium gradient. F-type ATPases consist of two structural domains, F(1) containing the extramembraneous catalytic core and F(0) containing the membrane proton channel, linked together by a central stalk and a peripheral stalk. During catalysis, ATP synthesis in the catalytic domain of F(1) is coupled via a rotary mechanism of the central stalk subunits to proton translocation.</text>
</comment>
<comment type="function">
    <text evidence="1">Component of the F(0) channel, it forms part of the peripheral stalk, linking F(1) to F(0).</text>
</comment>
<comment type="subunit">
    <text evidence="1">F-type ATPases have 2 components, F(1) - the catalytic core - and F(0) - the membrane proton channel. F(1) has five subunits: alpha(3), beta(3), gamma(1), delta(1), epsilon(1). F(0) has three main subunits: a(1), b(2) and c(10-14). The alpha and beta chains form an alternating ring which encloses part of the gamma chain. F(1) is attached to F(0) by a central stalk formed by the gamma and epsilon chains, while a peripheral stalk is formed by the delta and b chains.</text>
</comment>
<comment type="subcellular location">
    <subcellularLocation>
        <location evidence="1">Cell inner membrane</location>
        <topology evidence="1">Single-pass membrane protein</topology>
    </subcellularLocation>
</comment>
<comment type="similarity">
    <text evidence="1">Belongs to the ATPase B chain family.</text>
</comment>